<protein>
    <recommendedName>
        <fullName evidence="1">Transcription elongation factor GreA</fullName>
    </recommendedName>
    <alternativeName>
        <fullName evidence="1">Transcript cleavage factor GreA</fullName>
    </alternativeName>
</protein>
<keyword id="KW-0238">DNA-binding</keyword>
<keyword id="KW-1185">Reference proteome</keyword>
<keyword id="KW-0804">Transcription</keyword>
<keyword id="KW-0805">Transcription regulation</keyword>
<organism>
    <name type="scientific">Pelagibacter ubique (strain HTCC1062)</name>
    <dbReference type="NCBI Taxonomy" id="335992"/>
    <lineage>
        <taxon>Bacteria</taxon>
        <taxon>Pseudomonadati</taxon>
        <taxon>Pseudomonadota</taxon>
        <taxon>Alphaproteobacteria</taxon>
        <taxon>Candidatus Pelagibacterales</taxon>
        <taxon>Candidatus Pelagibacteraceae</taxon>
        <taxon>Candidatus Pelagibacter</taxon>
    </lineage>
</organism>
<feature type="chain" id="PRO_1000075879" description="Transcription elongation factor GreA">
    <location>
        <begin position="1"/>
        <end position="158"/>
    </location>
</feature>
<name>GREA_PELUB</name>
<gene>
    <name evidence="1" type="primary">greA</name>
    <name type="ordered locus">SAR11_0103</name>
</gene>
<dbReference type="EMBL" id="CP000084">
    <property type="protein sequence ID" value="AAZ20927.1"/>
    <property type="molecule type" value="Genomic_DNA"/>
</dbReference>
<dbReference type="RefSeq" id="WP_006997805.1">
    <property type="nucleotide sequence ID" value="NC_007205.1"/>
</dbReference>
<dbReference type="SMR" id="Q4FPG2"/>
<dbReference type="STRING" id="335992.SAR11_0103"/>
<dbReference type="GeneID" id="66294605"/>
<dbReference type="KEGG" id="pub:SAR11_0103"/>
<dbReference type="eggNOG" id="COG0782">
    <property type="taxonomic scope" value="Bacteria"/>
</dbReference>
<dbReference type="HOGENOM" id="CLU_101379_2_0_5"/>
<dbReference type="OrthoDB" id="9808774at2"/>
<dbReference type="Proteomes" id="UP000002528">
    <property type="component" value="Chromosome"/>
</dbReference>
<dbReference type="GO" id="GO:0003677">
    <property type="term" value="F:DNA binding"/>
    <property type="evidence" value="ECO:0007669"/>
    <property type="project" value="UniProtKB-UniRule"/>
</dbReference>
<dbReference type="GO" id="GO:0070063">
    <property type="term" value="F:RNA polymerase binding"/>
    <property type="evidence" value="ECO:0007669"/>
    <property type="project" value="InterPro"/>
</dbReference>
<dbReference type="GO" id="GO:0006354">
    <property type="term" value="P:DNA-templated transcription elongation"/>
    <property type="evidence" value="ECO:0007669"/>
    <property type="project" value="TreeGrafter"/>
</dbReference>
<dbReference type="GO" id="GO:0032784">
    <property type="term" value="P:regulation of DNA-templated transcription elongation"/>
    <property type="evidence" value="ECO:0007669"/>
    <property type="project" value="UniProtKB-UniRule"/>
</dbReference>
<dbReference type="FunFam" id="1.10.287.180:FF:000001">
    <property type="entry name" value="Transcription elongation factor GreA"/>
    <property type="match status" value="1"/>
</dbReference>
<dbReference type="FunFam" id="3.10.50.30:FF:000001">
    <property type="entry name" value="Transcription elongation factor GreA"/>
    <property type="match status" value="1"/>
</dbReference>
<dbReference type="Gene3D" id="3.10.50.30">
    <property type="entry name" value="Transcription elongation factor, GreA/GreB, C-terminal domain"/>
    <property type="match status" value="1"/>
</dbReference>
<dbReference type="Gene3D" id="1.10.287.180">
    <property type="entry name" value="Transcription elongation factor, GreA/GreB, N-terminal domain"/>
    <property type="match status" value="1"/>
</dbReference>
<dbReference type="HAMAP" id="MF_00105">
    <property type="entry name" value="GreA_GreB"/>
    <property type="match status" value="1"/>
</dbReference>
<dbReference type="InterPro" id="IPR036953">
    <property type="entry name" value="GreA/GreB_C_sf"/>
</dbReference>
<dbReference type="InterPro" id="IPR018151">
    <property type="entry name" value="TF_GreA/GreB_CS"/>
</dbReference>
<dbReference type="InterPro" id="IPR006359">
    <property type="entry name" value="Tscrpt_elong_fac_GreA"/>
</dbReference>
<dbReference type="InterPro" id="IPR028624">
    <property type="entry name" value="Tscrpt_elong_fac_GreA/B"/>
</dbReference>
<dbReference type="InterPro" id="IPR001437">
    <property type="entry name" value="Tscrpt_elong_fac_GreA/B_C"/>
</dbReference>
<dbReference type="InterPro" id="IPR023459">
    <property type="entry name" value="Tscrpt_elong_fac_GreA/B_fam"/>
</dbReference>
<dbReference type="InterPro" id="IPR022691">
    <property type="entry name" value="Tscrpt_elong_fac_GreA/B_N"/>
</dbReference>
<dbReference type="InterPro" id="IPR036805">
    <property type="entry name" value="Tscrpt_elong_fac_GreA/B_N_sf"/>
</dbReference>
<dbReference type="NCBIfam" id="TIGR01462">
    <property type="entry name" value="greA"/>
    <property type="match status" value="1"/>
</dbReference>
<dbReference type="NCBIfam" id="NF001261">
    <property type="entry name" value="PRK00226.1-2"/>
    <property type="match status" value="1"/>
</dbReference>
<dbReference type="NCBIfam" id="NF001263">
    <property type="entry name" value="PRK00226.1-4"/>
    <property type="match status" value="1"/>
</dbReference>
<dbReference type="NCBIfam" id="NF001264">
    <property type="entry name" value="PRK00226.1-5"/>
    <property type="match status" value="1"/>
</dbReference>
<dbReference type="PANTHER" id="PTHR30437">
    <property type="entry name" value="TRANSCRIPTION ELONGATION FACTOR GREA"/>
    <property type="match status" value="1"/>
</dbReference>
<dbReference type="PANTHER" id="PTHR30437:SF4">
    <property type="entry name" value="TRANSCRIPTION ELONGATION FACTOR GREA"/>
    <property type="match status" value="1"/>
</dbReference>
<dbReference type="Pfam" id="PF01272">
    <property type="entry name" value="GreA_GreB"/>
    <property type="match status" value="1"/>
</dbReference>
<dbReference type="Pfam" id="PF03449">
    <property type="entry name" value="GreA_GreB_N"/>
    <property type="match status" value="1"/>
</dbReference>
<dbReference type="PIRSF" id="PIRSF006092">
    <property type="entry name" value="GreA_GreB"/>
    <property type="match status" value="1"/>
</dbReference>
<dbReference type="SUPFAM" id="SSF54534">
    <property type="entry name" value="FKBP-like"/>
    <property type="match status" value="1"/>
</dbReference>
<dbReference type="SUPFAM" id="SSF46557">
    <property type="entry name" value="GreA transcript cleavage protein, N-terminal domain"/>
    <property type="match status" value="1"/>
</dbReference>
<dbReference type="PROSITE" id="PS00829">
    <property type="entry name" value="GREAB_1"/>
    <property type="match status" value="1"/>
</dbReference>
<reference key="1">
    <citation type="journal article" date="2005" name="Science">
        <title>Genome streamlining in a cosmopolitan oceanic bacterium.</title>
        <authorList>
            <person name="Giovannoni S.J."/>
            <person name="Tripp H.J."/>
            <person name="Givan S."/>
            <person name="Podar M."/>
            <person name="Vergin K.L."/>
            <person name="Baptista D."/>
            <person name="Bibbs L."/>
            <person name="Eads J."/>
            <person name="Richardson T.H."/>
            <person name="Noordewier M."/>
            <person name="Rappe M.S."/>
            <person name="Short J.M."/>
            <person name="Carrington J.C."/>
            <person name="Mathur E.J."/>
        </authorList>
    </citation>
    <scope>NUCLEOTIDE SEQUENCE [LARGE SCALE GENOMIC DNA]</scope>
    <source>
        <strain>HTCC1062</strain>
    </source>
</reference>
<sequence length="158" mass="17652">MDKEPITADGLESLKEELIFLKEKKRPQIVAAISEARSHGDLKENAEYHAAKEEQSHNEGRITEINDIIARANVIDVTKMSNDGKVIFGSTVDLENLDTGEKITYKIVGKDEADLQKKLIFFQSPIGRGLIGKNKNDLVEIKTPAGVKNFEIKDVKYV</sequence>
<comment type="function">
    <text evidence="1">Necessary for efficient RNA polymerase transcription elongation past template-encoded arresting sites. The arresting sites in DNA have the property of trapping a certain fraction of elongating RNA polymerases that pass through, resulting in locked ternary complexes. Cleavage of the nascent transcript by cleavage factors such as GreA or GreB allows the resumption of elongation from the new 3'terminus. GreA releases sequences of 2 to 3 nucleotides.</text>
</comment>
<comment type="similarity">
    <text evidence="1">Belongs to the GreA/GreB family.</text>
</comment>
<proteinExistence type="inferred from homology"/>
<accession>Q4FPG2</accession>
<evidence type="ECO:0000255" key="1">
    <source>
        <dbReference type="HAMAP-Rule" id="MF_00105"/>
    </source>
</evidence>